<proteinExistence type="inferred from homology"/>
<protein>
    <recommendedName>
        <fullName evidence="1">Chaperone protein DnaJ</fullName>
    </recommendedName>
</protein>
<comment type="function">
    <text evidence="1">Participates actively in the response to hyperosmotic and heat shock by preventing the aggregation of stress-denatured proteins and by disaggregating proteins, also in an autonomous, DnaK-independent fashion. Unfolded proteins bind initially to DnaJ; upon interaction with the DnaJ-bound protein, DnaK hydrolyzes its bound ATP, resulting in the formation of a stable complex. GrpE releases ADP from DnaK; ATP binding to DnaK triggers the release of the substrate protein, thus completing the reaction cycle. Several rounds of ATP-dependent interactions between DnaJ, DnaK and GrpE are required for fully efficient folding. Also involved, together with DnaK and GrpE, in the DNA replication of plasmids through activation of initiation proteins.</text>
</comment>
<comment type="cofactor">
    <cofactor evidence="1">
        <name>Zn(2+)</name>
        <dbReference type="ChEBI" id="CHEBI:29105"/>
    </cofactor>
    <text evidence="1">Binds 2 Zn(2+) ions per monomer.</text>
</comment>
<comment type="subunit">
    <text evidence="1">Homodimer.</text>
</comment>
<comment type="subcellular location">
    <subcellularLocation>
        <location evidence="1">Cytoplasm</location>
    </subcellularLocation>
</comment>
<comment type="domain">
    <text evidence="1">The J domain is necessary and sufficient to stimulate DnaK ATPase activity. Zinc center 1 plays an important role in the autonomous, DnaK-independent chaperone activity of DnaJ. Zinc center 2 is essential for interaction with DnaK and for DnaJ activity.</text>
</comment>
<comment type="similarity">
    <text evidence="1">Belongs to the DnaJ family.</text>
</comment>
<feature type="chain" id="PRO_1000164279" description="Chaperone protein DnaJ">
    <location>
        <begin position="1"/>
        <end position="377"/>
    </location>
</feature>
<feature type="domain" description="J" evidence="1">
    <location>
        <begin position="5"/>
        <end position="69"/>
    </location>
</feature>
<feature type="repeat" description="CXXCXGXG motif">
    <location>
        <begin position="147"/>
        <end position="154"/>
    </location>
</feature>
<feature type="repeat" description="CXXCXGXG motif">
    <location>
        <begin position="164"/>
        <end position="171"/>
    </location>
</feature>
<feature type="repeat" description="CXXCXGXG motif">
    <location>
        <begin position="190"/>
        <end position="197"/>
    </location>
</feature>
<feature type="repeat" description="CXXCXGXG motif">
    <location>
        <begin position="204"/>
        <end position="211"/>
    </location>
</feature>
<feature type="zinc finger region" description="CR-type" evidence="1">
    <location>
        <begin position="134"/>
        <end position="216"/>
    </location>
</feature>
<feature type="binding site" evidence="1">
    <location>
        <position position="147"/>
    </location>
    <ligand>
        <name>Zn(2+)</name>
        <dbReference type="ChEBI" id="CHEBI:29105"/>
        <label>1</label>
    </ligand>
</feature>
<feature type="binding site" evidence="1">
    <location>
        <position position="150"/>
    </location>
    <ligand>
        <name>Zn(2+)</name>
        <dbReference type="ChEBI" id="CHEBI:29105"/>
        <label>1</label>
    </ligand>
</feature>
<feature type="binding site" evidence="1">
    <location>
        <position position="164"/>
    </location>
    <ligand>
        <name>Zn(2+)</name>
        <dbReference type="ChEBI" id="CHEBI:29105"/>
        <label>2</label>
    </ligand>
</feature>
<feature type="binding site" evidence="1">
    <location>
        <position position="167"/>
    </location>
    <ligand>
        <name>Zn(2+)</name>
        <dbReference type="ChEBI" id="CHEBI:29105"/>
        <label>2</label>
    </ligand>
</feature>
<feature type="binding site" evidence="1">
    <location>
        <position position="190"/>
    </location>
    <ligand>
        <name>Zn(2+)</name>
        <dbReference type="ChEBI" id="CHEBI:29105"/>
        <label>2</label>
    </ligand>
</feature>
<feature type="binding site" evidence="1">
    <location>
        <position position="193"/>
    </location>
    <ligand>
        <name>Zn(2+)</name>
        <dbReference type="ChEBI" id="CHEBI:29105"/>
        <label>2</label>
    </ligand>
</feature>
<feature type="binding site" evidence="1">
    <location>
        <position position="204"/>
    </location>
    <ligand>
        <name>Zn(2+)</name>
        <dbReference type="ChEBI" id="CHEBI:29105"/>
        <label>1</label>
    </ligand>
</feature>
<feature type="binding site" evidence="1">
    <location>
        <position position="207"/>
    </location>
    <ligand>
        <name>Zn(2+)</name>
        <dbReference type="ChEBI" id="CHEBI:29105"/>
        <label>1</label>
    </ligand>
</feature>
<accession>B9DNJ9</accession>
<sequence length="377" mass="41590">MAKRDYYEVLGVSKDASKDEIKKAYRKLSKKYHPDINQEEGAEEKFKEISEAYEVLSDENKRANYDQFGHDGPQGGFGGQGFGGGQDFGGFGGGFEDIFSSFFGGGAQRDPNVPRKGDDLQYTMTVTFEEAAFGTEKEISIRKQVKCETCDGSGAKPGSKKKTCHYCNGSGHVSVEQNTILGRVRTEKVCPVCNGTGEEIEEPCPTCHGKGTETKNVKIKVKVPEGVDNDQQIRLAGEGAPGHNGGPQGDLYVVFRVEPSDTFEREGDDIFYNLNVSFPQAALGDEIKVPTLKGHVMLSVPEGTQNGKQFRMKEKGIKNVHGYGYGDLFININVVTPTKLNDKQKSIMREFAEVSGEEITEQPTNFKERARRFFKGE</sequence>
<evidence type="ECO:0000255" key="1">
    <source>
        <dbReference type="HAMAP-Rule" id="MF_01152"/>
    </source>
</evidence>
<reference key="1">
    <citation type="journal article" date="2009" name="Appl. Environ. Microbiol.">
        <title>Genome analysis of the meat starter culture bacterium Staphylococcus carnosus TM300.</title>
        <authorList>
            <person name="Rosenstein R."/>
            <person name="Nerz C."/>
            <person name="Biswas L."/>
            <person name="Resch A."/>
            <person name="Raddatz G."/>
            <person name="Schuster S.C."/>
            <person name="Goetz F."/>
        </authorList>
    </citation>
    <scope>NUCLEOTIDE SEQUENCE [LARGE SCALE GENOMIC DNA]</scope>
    <source>
        <strain>TM300</strain>
    </source>
</reference>
<organism>
    <name type="scientific">Staphylococcus carnosus (strain TM300)</name>
    <dbReference type="NCBI Taxonomy" id="396513"/>
    <lineage>
        <taxon>Bacteria</taxon>
        <taxon>Bacillati</taxon>
        <taxon>Bacillota</taxon>
        <taxon>Bacilli</taxon>
        <taxon>Bacillales</taxon>
        <taxon>Staphylococcaceae</taxon>
        <taxon>Staphylococcus</taxon>
    </lineage>
</organism>
<gene>
    <name evidence="1" type="primary">dnaJ</name>
    <name type="ordered locus">Sca_1201</name>
</gene>
<keyword id="KW-0143">Chaperone</keyword>
<keyword id="KW-0963">Cytoplasm</keyword>
<keyword id="KW-0235">DNA replication</keyword>
<keyword id="KW-0479">Metal-binding</keyword>
<keyword id="KW-1185">Reference proteome</keyword>
<keyword id="KW-0677">Repeat</keyword>
<keyword id="KW-0346">Stress response</keyword>
<keyword id="KW-0862">Zinc</keyword>
<keyword id="KW-0863">Zinc-finger</keyword>
<name>DNAJ_STACT</name>
<dbReference type="EMBL" id="AM295250">
    <property type="protein sequence ID" value="CAL28108.1"/>
    <property type="molecule type" value="Genomic_DNA"/>
</dbReference>
<dbReference type="RefSeq" id="WP_015900448.1">
    <property type="nucleotide sequence ID" value="NC_012121.1"/>
</dbReference>
<dbReference type="SMR" id="B9DNJ9"/>
<dbReference type="GeneID" id="93793626"/>
<dbReference type="KEGG" id="sca:SCA_1201"/>
<dbReference type="eggNOG" id="COG0484">
    <property type="taxonomic scope" value="Bacteria"/>
</dbReference>
<dbReference type="HOGENOM" id="CLU_017633_0_7_9"/>
<dbReference type="OrthoDB" id="9779889at2"/>
<dbReference type="BioCyc" id="SCAR396513:SCA_RS06015-MONOMER"/>
<dbReference type="Proteomes" id="UP000000444">
    <property type="component" value="Chromosome"/>
</dbReference>
<dbReference type="GO" id="GO:0005737">
    <property type="term" value="C:cytoplasm"/>
    <property type="evidence" value="ECO:0007669"/>
    <property type="project" value="UniProtKB-SubCell"/>
</dbReference>
<dbReference type="GO" id="GO:0005524">
    <property type="term" value="F:ATP binding"/>
    <property type="evidence" value="ECO:0007669"/>
    <property type="project" value="InterPro"/>
</dbReference>
<dbReference type="GO" id="GO:0031072">
    <property type="term" value="F:heat shock protein binding"/>
    <property type="evidence" value="ECO:0007669"/>
    <property type="project" value="InterPro"/>
</dbReference>
<dbReference type="GO" id="GO:0051082">
    <property type="term" value="F:unfolded protein binding"/>
    <property type="evidence" value="ECO:0007669"/>
    <property type="project" value="UniProtKB-UniRule"/>
</dbReference>
<dbReference type="GO" id="GO:0008270">
    <property type="term" value="F:zinc ion binding"/>
    <property type="evidence" value="ECO:0007669"/>
    <property type="project" value="UniProtKB-UniRule"/>
</dbReference>
<dbReference type="GO" id="GO:0051085">
    <property type="term" value="P:chaperone cofactor-dependent protein refolding"/>
    <property type="evidence" value="ECO:0007669"/>
    <property type="project" value="TreeGrafter"/>
</dbReference>
<dbReference type="GO" id="GO:0006260">
    <property type="term" value="P:DNA replication"/>
    <property type="evidence" value="ECO:0007669"/>
    <property type="project" value="UniProtKB-KW"/>
</dbReference>
<dbReference type="GO" id="GO:0042026">
    <property type="term" value="P:protein refolding"/>
    <property type="evidence" value="ECO:0007669"/>
    <property type="project" value="TreeGrafter"/>
</dbReference>
<dbReference type="GO" id="GO:0009408">
    <property type="term" value="P:response to heat"/>
    <property type="evidence" value="ECO:0007669"/>
    <property type="project" value="InterPro"/>
</dbReference>
<dbReference type="CDD" id="cd06257">
    <property type="entry name" value="DnaJ"/>
    <property type="match status" value="1"/>
</dbReference>
<dbReference type="CDD" id="cd10747">
    <property type="entry name" value="DnaJ_C"/>
    <property type="match status" value="1"/>
</dbReference>
<dbReference type="CDD" id="cd10719">
    <property type="entry name" value="DnaJ_zf"/>
    <property type="match status" value="1"/>
</dbReference>
<dbReference type="FunFam" id="1.10.287.110:FF:000031">
    <property type="entry name" value="Molecular chaperone DnaJ"/>
    <property type="match status" value="1"/>
</dbReference>
<dbReference type="FunFam" id="2.10.230.10:FF:000002">
    <property type="entry name" value="Molecular chaperone DnaJ"/>
    <property type="match status" value="1"/>
</dbReference>
<dbReference type="FunFam" id="2.60.260.20:FF:000004">
    <property type="entry name" value="Molecular chaperone DnaJ"/>
    <property type="match status" value="1"/>
</dbReference>
<dbReference type="Gene3D" id="1.10.287.110">
    <property type="entry name" value="DnaJ domain"/>
    <property type="match status" value="1"/>
</dbReference>
<dbReference type="Gene3D" id="2.10.230.10">
    <property type="entry name" value="Heat shock protein DnaJ, cysteine-rich domain"/>
    <property type="match status" value="1"/>
</dbReference>
<dbReference type="Gene3D" id="2.60.260.20">
    <property type="entry name" value="Urease metallochaperone UreE, N-terminal domain"/>
    <property type="match status" value="2"/>
</dbReference>
<dbReference type="HAMAP" id="MF_01152">
    <property type="entry name" value="DnaJ"/>
    <property type="match status" value="1"/>
</dbReference>
<dbReference type="InterPro" id="IPR012724">
    <property type="entry name" value="DnaJ"/>
</dbReference>
<dbReference type="InterPro" id="IPR002939">
    <property type="entry name" value="DnaJ_C"/>
</dbReference>
<dbReference type="InterPro" id="IPR001623">
    <property type="entry name" value="DnaJ_domain"/>
</dbReference>
<dbReference type="InterPro" id="IPR018253">
    <property type="entry name" value="DnaJ_domain_CS"/>
</dbReference>
<dbReference type="InterPro" id="IPR008971">
    <property type="entry name" value="HSP40/DnaJ_pept-bd"/>
</dbReference>
<dbReference type="InterPro" id="IPR001305">
    <property type="entry name" value="HSP_DnaJ_Cys-rich_dom"/>
</dbReference>
<dbReference type="InterPro" id="IPR036410">
    <property type="entry name" value="HSP_DnaJ_Cys-rich_dom_sf"/>
</dbReference>
<dbReference type="InterPro" id="IPR036869">
    <property type="entry name" value="J_dom_sf"/>
</dbReference>
<dbReference type="NCBIfam" id="TIGR02349">
    <property type="entry name" value="DnaJ_bact"/>
    <property type="match status" value="1"/>
</dbReference>
<dbReference type="NCBIfam" id="NF008035">
    <property type="entry name" value="PRK10767.1"/>
    <property type="match status" value="1"/>
</dbReference>
<dbReference type="NCBIfam" id="NF010873">
    <property type="entry name" value="PRK14280.1"/>
    <property type="match status" value="1"/>
</dbReference>
<dbReference type="PANTHER" id="PTHR43096:SF48">
    <property type="entry name" value="CHAPERONE PROTEIN DNAJ"/>
    <property type="match status" value="1"/>
</dbReference>
<dbReference type="PANTHER" id="PTHR43096">
    <property type="entry name" value="DNAJ HOMOLOG 1, MITOCHONDRIAL-RELATED"/>
    <property type="match status" value="1"/>
</dbReference>
<dbReference type="Pfam" id="PF00226">
    <property type="entry name" value="DnaJ"/>
    <property type="match status" value="1"/>
</dbReference>
<dbReference type="Pfam" id="PF01556">
    <property type="entry name" value="DnaJ_C"/>
    <property type="match status" value="1"/>
</dbReference>
<dbReference type="Pfam" id="PF00684">
    <property type="entry name" value="DnaJ_CXXCXGXG"/>
    <property type="match status" value="1"/>
</dbReference>
<dbReference type="PRINTS" id="PR00625">
    <property type="entry name" value="JDOMAIN"/>
</dbReference>
<dbReference type="SMART" id="SM00271">
    <property type="entry name" value="DnaJ"/>
    <property type="match status" value="1"/>
</dbReference>
<dbReference type="SUPFAM" id="SSF46565">
    <property type="entry name" value="Chaperone J-domain"/>
    <property type="match status" value="1"/>
</dbReference>
<dbReference type="SUPFAM" id="SSF57938">
    <property type="entry name" value="DnaJ/Hsp40 cysteine-rich domain"/>
    <property type="match status" value="1"/>
</dbReference>
<dbReference type="SUPFAM" id="SSF49493">
    <property type="entry name" value="HSP40/DnaJ peptide-binding domain"/>
    <property type="match status" value="2"/>
</dbReference>
<dbReference type="PROSITE" id="PS00636">
    <property type="entry name" value="DNAJ_1"/>
    <property type="match status" value="1"/>
</dbReference>
<dbReference type="PROSITE" id="PS50076">
    <property type="entry name" value="DNAJ_2"/>
    <property type="match status" value="1"/>
</dbReference>
<dbReference type="PROSITE" id="PS51188">
    <property type="entry name" value="ZF_CR"/>
    <property type="match status" value="1"/>
</dbReference>